<gene>
    <name evidence="1" type="primary">nfo</name>
    <name type="ordered locus">ASA_2200</name>
</gene>
<sequence>MKYIGAHVSAAGGVENTIARAQAIGANAFALFTKNQRQWQAAPLSEASIRAFKLACEKAGFRPEQILPHDSYLINLGHPDPDGLAKSRDAFLDEIKRCEQLGLCYLNFHPGSHLKQIPEAASLTLVSESINWALERSQGVTAVIENTAGQGTNLGWSFEHLATLIDGVEDKSRVGICFDTCHAFAAGYDLRTPESCAQVFADFDRIVGFQYLKGMHINGAKCTFGSRVDRHHSLREGNLGEAVFHHIMNDDRFDGIPLVLETIDETIWGDEISWLRSLAKA</sequence>
<keyword id="KW-0227">DNA damage</keyword>
<keyword id="KW-0234">DNA repair</keyword>
<keyword id="KW-0255">Endonuclease</keyword>
<keyword id="KW-0378">Hydrolase</keyword>
<keyword id="KW-0479">Metal-binding</keyword>
<keyword id="KW-0540">Nuclease</keyword>
<keyword id="KW-0862">Zinc</keyword>
<reference key="1">
    <citation type="journal article" date="2008" name="BMC Genomics">
        <title>The genome of Aeromonas salmonicida subsp. salmonicida A449: insights into the evolution of a fish pathogen.</title>
        <authorList>
            <person name="Reith M.E."/>
            <person name="Singh R.K."/>
            <person name="Curtis B."/>
            <person name="Boyd J.M."/>
            <person name="Bouevitch A."/>
            <person name="Kimball J."/>
            <person name="Munholland J."/>
            <person name="Murphy C."/>
            <person name="Sarty D."/>
            <person name="Williams J."/>
            <person name="Nash J.H."/>
            <person name="Johnson S.C."/>
            <person name="Brown L.L."/>
        </authorList>
    </citation>
    <scope>NUCLEOTIDE SEQUENCE [LARGE SCALE GENOMIC DNA]</scope>
    <source>
        <strain>A449</strain>
    </source>
</reference>
<feature type="chain" id="PRO_1000011286" description="Probable endonuclease 4">
    <location>
        <begin position="1"/>
        <end position="281"/>
    </location>
</feature>
<feature type="binding site" evidence="1">
    <location>
        <position position="69"/>
    </location>
    <ligand>
        <name>Zn(2+)</name>
        <dbReference type="ChEBI" id="CHEBI:29105"/>
        <label>1</label>
    </ligand>
</feature>
<feature type="binding site" evidence="1">
    <location>
        <position position="109"/>
    </location>
    <ligand>
        <name>Zn(2+)</name>
        <dbReference type="ChEBI" id="CHEBI:29105"/>
        <label>1</label>
    </ligand>
</feature>
<feature type="binding site" evidence="1">
    <location>
        <position position="145"/>
    </location>
    <ligand>
        <name>Zn(2+)</name>
        <dbReference type="ChEBI" id="CHEBI:29105"/>
        <label>1</label>
    </ligand>
</feature>
<feature type="binding site" evidence="1">
    <location>
        <position position="145"/>
    </location>
    <ligand>
        <name>Zn(2+)</name>
        <dbReference type="ChEBI" id="CHEBI:29105"/>
        <label>2</label>
    </ligand>
</feature>
<feature type="binding site" evidence="1">
    <location>
        <position position="179"/>
    </location>
    <ligand>
        <name>Zn(2+)</name>
        <dbReference type="ChEBI" id="CHEBI:29105"/>
        <label>2</label>
    </ligand>
</feature>
<feature type="binding site" evidence="1">
    <location>
        <position position="182"/>
    </location>
    <ligand>
        <name>Zn(2+)</name>
        <dbReference type="ChEBI" id="CHEBI:29105"/>
        <label>3</label>
    </ligand>
</feature>
<feature type="binding site" evidence="1">
    <location>
        <position position="216"/>
    </location>
    <ligand>
        <name>Zn(2+)</name>
        <dbReference type="ChEBI" id="CHEBI:29105"/>
        <label>2</label>
    </ligand>
</feature>
<feature type="binding site" evidence="1">
    <location>
        <position position="229"/>
    </location>
    <ligand>
        <name>Zn(2+)</name>
        <dbReference type="ChEBI" id="CHEBI:29105"/>
        <label>3</label>
    </ligand>
</feature>
<feature type="binding site" evidence="1">
    <location>
        <position position="231"/>
    </location>
    <ligand>
        <name>Zn(2+)</name>
        <dbReference type="ChEBI" id="CHEBI:29105"/>
        <label>3</label>
    </ligand>
</feature>
<feature type="binding site" evidence="1">
    <location>
        <position position="261"/>
    </location>
    <ligand>
        <name>Zn(2+)</name>
        <dbReference type="ChEBI" id="CHEBI:29105"/>
        <label>2</label>
    </ligand>
</feature>
<comment type="function">
    <text evidence="1">Endonuclease IV plays a role in DNA repair. It cleaves phosphodiester bonds at apurinic or apyrimidinic (AP) sites, generating a 3'-hydroxyl group and a 5'-terminal sugar phosphate.</text>
</comment>
<comment type="catalytic activity">
    <reaction evidence="1">
        <text>Endonucleolytic cleavage to 5'-phosphooligonucleotide end-products.</text>
        <dbReference type="EC" id="3.1.21.2"/>
    </reaction>
</comment>
<comment type="cofactor">
    <cofactor evidence="1">
        <name>Zn(2+)</name>
        <dbReference type="ChEBI" id="CHEBI:29105"/>
    </cofactor>
    <text evidence="1">Binds 3 Zn(2+) ions.</text>
</comment>
<comment type="similarity">
    <text evidence="1">Belongs to the AP endonuclease 2 family.</text>
</comment>
<protein>
    <recommendedName>
        <fullName evidence="1">Probable endonuclease 4</fullName>
        <ecNumber evidence="1">3.1.21.2</ecNumber>
    </recommendedName>
    <alternativeName>
        <fullName evidence="1">Endodeoxyribonuclease IV</fullName>
    </alternativeName>
    <alternativeName>
        <fullName evidence="1">Endonuclease IV</fullName>
    </alternativeName>
</protein>
<name>END4_AERS4</name>
<dbReference type="EC" id="3.1.21.2" evidence="1"/>
<dbReference type="EMBL" id="CP000644">
    <property type="protein sequence ID" value="ABO90262.1"/>
    <property type="molecule type" value="Genomic_DNA"/>
</dbReference>
<dbReference type="RefSeq" id="WP_005311209.1">
    <property type="nucleotide sequence ID" value="NC_009348.1"/>
</dbReference>
<dbReference type="SMR" id="A4SMZ0"/>
<dbReference type="STRING" id="29491.GCA_000820065_00469"/>
<dbReference type="KEGG" id="asa:ASA_2200"/>
<dbReference type="eggNOG" id="COG0648">
    <property type="taxonomic scope" value="Bacteria"/>
</dbReference>
<dbReference type="HOGENOM" id="CLU_025885_0_4_6"/>
<dbReference type="Proteomes" id="UP000000225">
    <property type="component" value="Chromosome"/>
</dbReference>
<dbReference type="GO" id="GO:0008833">
    <property type="term" value="F:deoxyribonuclease IV (phage-T4-induced) activity"/>
    <property type="evidence" value="ECO:0007669"/>
    <property type="project" value="UniProtKB-UniRule"/>
</dbReference>
<dbReference type="GO" id="GO:0003677">
    <property type="term" value="F:DNA binding"/>
    <property type="evidence" value="ECO:0007669"/>
    <property type="project" value="InterPro"/>
</dbReference>
<dbReference type="GO" id="GO:0003906">
    <property type="term" value="F:DNA-(apurinic or apyrimidinic site) endonuclease activity"/>
    <property type="evidence" value="ECO:0007669"/>
    <property type="project" value="TreeGrafter"/>
</dbReference>
<dbReference type="GO" id="GO:0008081">
    <property type="term" value="F:phosphoric diester hydrolase activity"/>
    <property type="evidence" value="ECO:0007669"/>
    <property type="project" value="TreeGrafter"/>
</dbReference>
<dbReference type="GO" id="GO:0008270">
    <property type="term" value="F:zinc ion binding"/>
    <property type="evidence" value="ECO:0007669"/>
    <property type="project" value="UniProtKB-UniRule"/>
</dbReference>
<dbReference type="GO" id="GO:0006284">
    <property type="term" value="P:base-excision repair"/>
    <property type="evidence" value="ECO:0007669"/>
    <property type="project" value="TreeGrafter"/>
</dbReference>
<dbReference type="CDD" id="cd00019">
    <property type="entry name" value="AP2Ec"/>
    <property type="match status" value="1"/>
</dbReference>
<dbReference type="FunFam" id="3.20.20.150:FF:000001">
    <property type="entry name" value="Probable endonuclease 4"/>
    <property type="match status" value="1"/>
</dbReference>
<dbReference type="Gene3D" id="3.20.20.150">
    <property type="entry name" value="Divalent-metal-dependent TIM barrel enzymes"/>
    <property type="match status" value="1"/>
</dbReference>
<dbReference type="HAMAP" id="MF_00152">
    <property type="entry name" value="Nfo"/>
    <property type="match status" value="1"/>
</dbReference>
<dbReference type="InterPro" id="IPR001719">
    <property type="entry name" value="AP_endonuc_2"/>
</dbReference>
<dbReference type="InterPro" id="IPR018246">
    <property type="entry name" value="AP_endonuc_F2_Zn_BS"/>
</dbReference>
<dbReference type="InterPro" id="IPR036237">
    <property type="entry name" value="Xyl_isomerase-like_sf"/>
</dbReference>
<dbReference type="InterPro" id="IPR013022">
    <property type="entry name" value="Xyl_isomerase-like_TIM-brl"/>
</dbReference>
<dbReference type="NCBIfam" id="TIGR00587">
    <property type="entry name" value="nfo"/>
    <property type="match status" value="1"/>
</dbReference>
<dbReference type="NCBIfam" id="NF002199">
    <property type="entry name" value="PRK01060.1-4"/>
    <property type="match status" value="1"/>
</dbReference>
<dbReference type="PANTHER" id="PTHR21445:SF0">
    <property type="entry name" value="APURINIC-APYRIMIDINIC ENDONUCLEASE"/>
    <property type="match status" value="1"/>
</dbReference>
<dbReference type="PANTHER" id="PTHR21445">
    <property type="entry name" value="ENDONUCLEASE IV ENDODEOXYRIBONUCLEASE IV"/>
    <property type="match status" value="1"/>
</dbReference>
<dbReference type="Pfam" id="PF01261">
    <property type="entry name" value="AP_endonuc_2"/>
    <property type="match status" value="1"/>
</dbReference>
<dbReference type="SMART" id="SM00518">
    <property type="entry name" value="AP2Ec"/>
    <property type="match status" value="1"/>
</dbReference>
<dbReference type="SUPFAM" id="SSF51658">
    <property type="entry name" value="Xylose isomerase-like"/>
    <property type="match status" value="1"/>
</dbReference>
<dbReference type="PROSITE" id="PS00729">
    <property type="entry name" value="AP_NUCLEASE_F2_1"/>
    <property type="match status" value="1"/>
</dbReference>
<dbReference type="PROSITE" id="PS00730">
    <property type="entry name" value="AP_NUCLEASE_F2_2"/>
    <property type="match status" value="1"/>
</dbReference>
<dbReference type="PROSITE" id="PS00731">
    <property type="entry name" value="AP_NUCLEASE_F2_3"/>
    <property type="match status" value="1"/>
</dbReference>
<dbReference type="PROSITE" id="PS51432">
    <property type="entry name" value="AP_NUCLEASE_F2_4"/>
    <property type="match status" value="1"/>
</dbReference>
<organism>
    <name type="scientific">Aeromonas salmonicida (strain A449)</name>
    <dbReference type="NCBI Taxonomy" id="382245"/>
    <lineage>
        <taxon>Bacteria</taxon>
        <taxon>Pseudomonadati</taxon>
        <taxon>Pseudomonadota</taxon>
        <taxon>Gammaproteobacteria</taxon>
        <taxon>Aeromonadales</taxon>
        <taxon>Aeromonadaceae</taxon>
        <taxon>Aeromonas</taxon>
    </lineage>
</organism>
<accession>A4SMZ0</accession>
<evidence type="ECO:0000255" key="1">
    <source>
        <dbReference type="HAMAP-Rule" id="MF_00152"/>
    </source>
</evidence>
<proteinExistence type="inferred from homology"/>